<gene>
    <name evidence="1" type="primary">CCK</name>
</gene>
<reference evidence="12" key="1">
    <citation type="journal article" date="1986" name="J. Biol. Chem.">
        <title>New molecular forms of cholecystokinin. Microsequence analysis of forms previously characterized by chromatographic methods.</title>
        <authorList>
            <person name="Reeve J.R. Jr."/>
            <person name="Eysselein V.E."/>
            <person name="Walsh J.H."/>
            <person name="Ben-Avram C.M."/>
            <person name="Shively J.E."/>
        </authorList>
    </citation>
    <scope>PROTEIN SEQUENCE</scope>
    <source>
        <strain evidence="8">Mongrel</strain>
        <tissue evidence="8">Intestinal mucosa</tissue>
    </source>
</reference>
<reference evidence="12" key="2">
    <citation type="journal article" date="1982" name="Peptides">
        <title>Partial structure of a large canine cholecystokinin (CCK58): amino acid sequence.</title>
        <authorList>
            <person name="Eysselein V.E."/>
            <person name="Reeve J.R. Jr."/>
            <person name="Shively J.E."/>
            <person name="Hawke D."/>
            <person name="Walsh J.H."/>
        </authorList>
    </citation>
    <scope>PROTEIN SEQUENCE OF 1-38</scope>
    <scope>FUNCTION</scope>
    <source>
        <tissue evidence="10">Intestinal mucosa</tissue>
    </source>
</reference>
<reference evidence="12" key="3">
    <citation type="journal article" date="2003" name="Regul. Pept.">
        <title>Synthesis of biologically active canine CCK-58.</title>
        <authorList>
            <person name="Reeve J.R. Jr."/>
            <person name="Keire D.A."/>
            <person name="Coskun T."/>
            <person name="Green G.M."/>
            <person name="Evans C."/>
            <person name="Ho F.-J."/>
            <person name="Lee T.D."/>
            <person name="Davis M.T."/>
            <person name="Shively J.E."/>
            <person name="Solomon T.E."/>
        </authorList>
    </citation>
    <scope>PROTEIN SEQUENCE OF 1-29</scope>
    <scope>SYNTHESIS</scope>
    <scope>FUNCTION</scope>
    <scope>MASS SPECTROMETRY</scope>
    <scope>SULFATION AT TYR-52</scope>
</reference>
<reference evidence="12" key="4">
    <citation type="journal article" date="2004" name="Am. J. Physiol.">
        <title>Identification of nonsulfated cholecystokinin-58 in canine intestinal extracts and its biological properties.</title>
        <authorList>
            <person name="Reeve J.R. Jr."/>
            <person name="Liddle R.A."/>
            <person name="McVey D.C."/>
            <person name="Vigna S.R."/>
            <person name="Solomon T.E."/>
            <person name="Keire D.A."/>
            <person name="Rosenquist G."/>
            <person name="Shively J.E."/>
            <person name="Lee T.D."/>
            <person name="Chew P."/>
            <person name="Green G.M."/>
            <person name="Coskun T."/>
        </authorList>
    </citation>
    <scope>PROTEIN SEQUENCE OF 1-25 AND 32-58</scope>
    <scope>FUNCTION</scope>
    <scope>AMIDATION AT PHE-58</scope>
    <scope>SULFATION AT TYR-52</scope>
    <source>
        <tissue evidence="6">Intestinal mucosa</tissue>
    </source>
</reference>
<reference evidence="12" key="5">
    <citation type="journal article" date="1984" name="Proc. Natl. Acad. Sci. U.S.A.">
        <title>Isolation of a large cholecystokinin precursor from canine brain.</title>
        <authorList>
            <person name="Eysselein V.E."/>
            <person name="Reeve J.R. Jr."/>
            <person name="Shively J.E."/>
            <person name="Miller C."/>
            <person name="Walsh J.H."/>
        </authorList>
    </citation>
    <scope>PROTEIN SEQUENCE OF 1-22</scope>
    <source>
        <strain evidence="9">Mongrel</strain>
        <tissue evidence="9">Brain</tissue>
    </source>
</reference>
<reference evidence="12 13" key="6">
    <citation type="journal article" date="1991" name="J. Biol. Chem.">
        <title>Characterization of canine intestinal cholecystokinin-58 lacking its carboxyl-terminal nonapeptide. Evidence for similar post-translational processing in brain and gut.</title>
        <authorList>
            <person name="Reeve J.R. Jr."/>
            <person name="Eysselein V.E."/>
            <person name="Eberlein G.A."/>
            <person name="Chew P."/>
            <person name="Ho F.-J."/>
            <person name="Huebner V.D."/>
            <person name="Shively J.E."/>
            <person name="Lee T.D."/>
            <person name="Liddle R.A."/>
        </authorList>
    </citation>
    <scope>PROTEIN SEQUENCE OF 1-12</scope>
    <scope>FUNCTION</scope>
    <scope>MASS SPECTROMETRY</scope>
    <source>
        <strain evidence="7">Mongrel</strain>
        <tissue evidence="7">Intestinal mucosa</tissue>
    </source>
</reference>
<reference evidence="12" key="7">
    <citation type="journal article" date="1996" name="Am. J. Physiol.">
        <title>Evidence that CCK-58 has structure that influences its biological activity.</title>
        <authorList>
            <person name="Reeve J.R. Jr."/>
            <person name="Eysselein V.E."/>
            <person name="Rosenquist G."/>
            <person name="Zeeh J."/>
            <person name="Regner U."/>
            <person name="Ho F.-J."/>
            <person name="Chew P."/>
            <person name="Davis M.T."/>
            <person name="Lee T.D."/>
            <person name="Shively J.E."/>
            <person name="Brazer S.R."/>
            <person name="Liddle R.A."/>
        </authorList>
    </citation>
    <scope>FUNCTION</scope>
    <scope>SYNTHESIS OF 51-58</scope>
    <scope>MASS SPECTROMETRY</scope>
</reference>
<reference evidence="12" key="8">
    <citation type="journal article" date="2002" name="Pancreas">
        <title>Differences in receptor binding and stability to enzymatic digestion between CCK-8 and CCK-58.</title>
        <authorList>
            <person name="Reeve J.R. Jr."/>
            <person name="McVey D.C."/>
            <person name="Bunnett N.W."/>
            <person name="Solomon T.E."/>
            <person name="Keire D.A."/>
            <person name="Ho F.-J."/>
            <person name="Davis M.T."/>
            <person name="Lee T.D."/>
            <person name="Shively J.E."/>
            <person name="Vigna S.R."/>
        </authorList>
    </citation>
    <scope>SUBUNIT</scope>
    <scope>MASS SPECTROMETRY</scope>
</reference>
<accession>Q9TS44</accession>
<feature type="peptide" id="PRO_0000306294" description="Cholecystokinin-58" evidence="8">
    <location>
        <begin position="1"/>
        <end position="58"/>
    </location>
</feature>
<feature type="peptide" id="PRO_0000306295" description="Cholecystokinin-58 desnonopeptide" evidence="8">
    <location>
        <begin position="1"/>
        <end position="49"/>
    </location>
</feature>
<feature type="peptide" id="PRO_0000306296" description="Cholecystokinin-39" evidence="8">
    <location>
        <begin position="20"/>
        <end position="58"/>
    </location>
</feature>
<feature type="peptide" id="PRO_0000306297" description="Cholecystokinin-33" evidence="8">
    <location>
        <begin position="26"/>
        <end position="58"/>
    </location>
</feature>
<feature type="peptide" id="PRO_0000306298" description="Cholecystokinin-25" evidence="8">
    <location>
        <begin position="34"/>
        <end position="58"/>
    </location>
</feature>
<feature type="peptide" id="PRO_0000306299" description="Cholecystokinin-18" evidence="8">
    <location>
        <begin position="41"/>
        <end position="58"/>
    </location>
</feature>
<feature type="peptide" id="PRO_0000306300" description="Cholecystokinin-12" evidence="1">
    <location>
        <begin position="47"/>
        <end position="58"/>
    </location>
</feature>
<feature type="peptide" id="PRO_0000306301" description="Cholecystokinin-8" evidence="11">
    <location>
        <begin position="51"/>
        <end position="58"/>
    </location>
</feature>
<feature type="peptide" id="PRO_0000306302" description="Cholecystokinin-7" evidence="8">
    <location>
        <begin position="52"/>
        <end position="58"/>
    </location>
</feature>
<feature type="peptide" id="PRO_0000306303" description="Cholecystokinin-5" evidence="8">
    <location>
        <begin position="54"/>
        <end position="58"/>
    </location>
</feature>
<feature type="modified residue" description="Sulfotyrosine" evidence="5 6">
    <location>
        <position position="52"/>
    </location>
</feature>
<feature type="modified residue" description="Phenylalanine amide" evidence="6">
    <location>
        <position position="58"/>
    </location>
</feature>
<feature type="sequence conflict" description="In Ref. 2; AA sequence." evidence="12" ref="2">
    <location>
        <position position="2"/>
    </location>
</feature>
<feature type="sequence conflict" description="In Ref. 2; AA sequence." evidence="12" ref="2">
    <original>D</original>
    <variation>NS</variation>
    <location>
        <position position="6"/>
    </location>
</feature>
<sequence>AVQKVDGEPRAHLGALLARYIQQARKAPSGRMSVIKNLQNLDPSHRISDRDYMGWMDF</sequence>
<keyword id="KW-0027">Amidation</keyword>
<keyword id="KW-0165">Cleavage on pair of basic residues</keyword>
<keyword id="KW-0903">Direct protein sequencing</keyword>
<keyword id="KW-0372">Hormone</keyword>
<keyword id="KW-1185">Reference proteome</keyword>
<keyword id="KW-0964">Secreted</keyword>
<keyword id="KW-0765">Sulfation</keyword>
<organism>
    <name type="scientific">Canis lupus familiaris</name>
    <name type="common">Dog</name>
    <name type="synonym">Canis familiaris</name>
    <dbReference type="NCBI Taxonomy" id="9615"/>
    <lineage>
        <taxon>Eukaryota</taxon>
        <taxon>Metazoa</taxon>
        <taxon>Chordata</taxon>
        <taxon>Craniata</taxon>
        <taxon>Vertebrata</taxon>
        <taxon>Euteleostomi</taxon>
        <taxon>Mammalia</taxon>
        <taxon>Eutheria</taxon>
        <taxon>Laurasiatheria</taxon>
        <taxon>Carnivora</taxon>
        <taxon>Caniformia</taxon>
        <taxon>Canidae</taxon>
        <taxon>Canis</taxon>
    </lineage>
</organism>
<protein>
    <recommendedName>
        <fullName>Cholecystokinins</fullName>
        <shortName>CCK</shortName>
    </recommendedName>
    <component>
        <recommendedName>
            <fullName>Cholecystokinin-58</fullName>
            <shortName>CCK58</shortName>
        </recommendedName>
    </component>
    <component>
        <recommendedName>
            <fullName>Cholecystokinin-58 desnonopeptide</fullName>
        </recommendedName>
        <alternativeName>
            <fullName>(1-49)-CCK58</fullName>
        </alternativeName>
    </component>
    <component>
        <recommendedName>
            <fullName>Cholecystokinin-39</fullName>
            <shortName>CCK39</shortName>
        </recommendedName>
    </component>
    <component>
        <recommendedName>
            <fullName>Cholecystokinin-33</fullName>
            <shortName>CCK33</shortName>
        </recommendedName>
    </component>
    <component>
        <recommendedName>
            <fullName>Cholecystokinin-25</fullName>
            <shortName>CCK25</shortName>
        </recommendedName>
    </component>
    <component>
        <recommendedName>
            <fullName>Cholecystokinin-18</fullName>
            <shortName>CCK18</shortName>
        </recommendedName>
    </component>
    <component>
        <recommendedName>
            <fullName>Cholecystokinin-12</fullName>
            <shortName>CCK12</shortName>
        </recommendedName>
    </component>
    <component>
        <recommendedName>
            <fullName>Cholecystokinin-8</fullName>
            <shortName>CCK8</shortName>
        </recommendedName>
    </component>
    <component>
        <recommendedName>
            <fullName>Cholecystokinin-7</fullName>
            <shortName>CCK7</shortName>
        </recommendedName>
    </component>
    <component>
        <recommendedName>
            <fullName>Cholecystokinin-5</fullName>
            <shortName>CCK5</shortName>
        </recommendedName>
    </component>
</protein>
<evidence type="ECO:0000250" key="1">
    <source>
        <dbReference type="UniProtKB" id="P01356"/>
    </source>
</evidence>
<evidence type="ECO:0000250" key="2">
    <source>
        <dbReference type="UniProtKB" id="P06307"/>
    </source>
</evidence>
<evidence type="ECO:0000255" key="3"/>
<evidence type="ECO:0000269" key="4">
    <source>
    </source>
</evidence>
<evidence type="ECO:0000269" key="5">
    <source>
    </source>
</evidence>
<evidence type="ECO:0000269" key="6">
    <source>
    </source>
</evidence>
<evidence type="ECO:0000269" key="7">
    <source>
    </source>
</evidence>
<evidence type="ECO:0000269" key="8">
    <source>
    </source>
</evidence>
<evidence type="ECO:0000269" key="9">
    <source>
    </source>
</evidence>
<evidence type="ECO:0000269" key="10">
    <source>
    </source>
</evidence>
<evidence type="ECO:0000269" key="11">
    <source>
    </source>
</evidence>
<evidence type="ECO:0000305" key="12"/>
<evidence type="ECO:0000312" key="13">
    <source>
        <dbReference type="PIR" id="A39462"/>
    </source>
</evidence>
<proteinExistence type="evidence at protein level"/>
<comment type="function">
    <text evidence="5 6 7 10 11 12">This peptide hormone induces gall bladder contraction and the release of pancreatic enzymes in the gut. Its function in the brain is not clear. Binding to CCK-A receptors stimulates amylase release from the pancreas, binding to CCK-B receptors stimulates gastric acid secretion. cholecystokinin 58 and cholecystokinin 8, but not cholecystokinin 58 desnonopeptide, stimulate amylase release from the pancreas. cholecystokinin 58, but not cholecystokinin 8, increases bile-pancreatic volume.</text>
</comment>
<comment type="subunit">
    <text evidence="4">Binds to CCK-A receptors in the pancreas and CCK-B receptors in the brain. cholecystokinin 8 binds CCK-A receptors more potently than cholecystokinin 58, cholecystokinin 8 and cholecystokinin 58 bind CCK-B receptors with equal affinity.</text>
</comment>
<comment type="subcellular location">
    <subcellularLocation>
        <location evidence="12">Secreted</location>
    </subcellularLocation>
</comment>
<comment type="PTM">
    <text evidence="8">The precursor is cleaved by proteases to produce a number of active cholecystokinins.</text>
</comment>
<comment type="PTM">
    <molecule>Cholecystokinin-58</molecule>
    <text evidence="5 6">Cholecystokinin 58 occurs in both sulfated (CCK58(s)) and nonsulfated (CCK58(ns)) forms, which differ in their receptor-binding activities. CCK58(s) binds to the CCK-A receptor with high affinity, CCK58(ns) binds poorly to the CCK-A receptor. CCK58(s) and CCK58(ns) both bind the CCK-B receptor.</text>
</comment>
<comment type="PTM">
    <molecule>Cholecystokinin-5</molecule>
    <text evidence="2">The precursor is cleaved by ACE, which removes the Gly-Arg-Arg peptide at the C-terminus, leading to mature hormone.</text>
</comment>
<comment type="mass spectrometry">
    <molecule>Cholecystokinin-58</molecule>
</comment>
<comment type="mass spectrometry">
    <molecule>Cholecystokinin-58</molecule>
</comment>
<comment type="mass spectrometry">
    <molecule>Cholecystokinin-58</molecule>
</comment>
<comment type="mass spectrometry">
    <molecule>Cholecystokinin-58 desnonopeptide</molecule>
</comment>
<comment type="similarity">
    <text evidence="3">Belongs to the gastrin/cholecystokinin family.</text>
</comment>
<dbReference type="PIR" id="A39462">
    <property type="entry name" value="A39462"/>
</dbReference>
<dbReference type="SMR" id="Q9TS44"/>
<dbReference type="FunCoup" id="Q9TS44">
    <property type="interactions" value="52"/>
</dbReference>
<dbReference type="STRING" id="9615.ENSCAFP00000065716"/>
<dbReference type="PaxDb" id="9612-ENSCAFP00000007846"/>
<dbReference type="eggNOG" id="ENOG502S472">
    <property type="taxonomic scope" value="Eukaryota"/>
</dbReference>
<dbReference type="InParanoid" id="Q9TS44"/>
<dbReference type="OrthoDB" id="9862982at2759"/>
<dbReference type="Proteomes" id="UP000002254">
    <property type="component" value="Unplaced"/>
</dbReference>
<dbReference type="Proteomes" id="UP000694429">
    <property type="component" value="Unplaced"/>
</dbReference>
<dbReference type="Proteomes" id="UP000694542">
    <property type="component" value="Unplaced"/>
</dbReference>
<dbReference type="Proteomes" id="UP000805418">
    <property type="component" value="Unplaced"/>
</dbReference>
<dbReference type="GO" id="GO:0030424">
    <property type="term" value="C:axon"/>
    <property type="evidence" value="ECO:0000318"/>
    <property type="project" value="GO_Central"/>
</dbReference>
<dbReference type="GO" id="GO:0005615">
    <property type="term" value="C:extracellular space"/>
    <property type="evidence" value="ECO:0000250"/>
    <property type="project" value="AgBase"/>
</dbReference>
<dbReference type="GO" id="GO:0005184">
    <property type="term" value="F:neuropeptide hormone activity"/>
    <property type="evidence" value="ECO:0000318"/>
    <property type="project" value="GO_Central"/>
</dbReference>
<dbReference type="GO" id="GO:0007586">
    <property type="term" value="P:digestion"/>
    <property type="evidence" value="ECO:0000318"/>
    <property type="project" value="GO_Central"/>
</dbReference>
<dbReference type="GO" id="GO:0032094">
    <property type="term" value="P:response to food"/>
    <property type="evidence" value="ECO:0000250"/>
    <property type="project" value="AgBase"/>
</dbReference>
<dbReference type="InterPro" id="IPR015499">
    <property type="entry name" value="CCK-like"/>
</dbReference>
<dbReference type="InterPro" id="IPR001651">
    <property type="entry name" value="Gastrin/CCK"/>
</dbReference>
<dbReference type="InterPro" id="IPR013152">
    <property type="entry name" value="Gastrin/cholecystokinin_CS"/>
</dbReference>
<dbReference type="PANTHER" id="PTHR10786">
    <property type="entry name" value="CHOLECYSTOKININ"/>
    <property type="match status" value="1"/>
</dbReference>
<dbReference type="PANTHER" id="PTHR10786:SF0">
    <property type="entry name" value="CHOLECYSTOKININ"/>
    <property type="match status" value="1"/>
</dbReference>
<dbReference type="Pfam" id="PF00918">
    <property type="entry name" value="Gastrin"/>
    <property type="match status" value="1"/>
</dbReference>
<dbReference type="PROSITE" id="PS00259">
    <property type="entry name" value="GASTRIN"/>
    <property type="match status" value="1"/>
</dbReference>
<name>CCKN_CANLF</name>